<protein>
    <recommendedName>
        <fullName evidence="1">GTP 3',8-cyclase</fullName>
        <ecNumber evidence="1">4.1.99.22</ecNumber>
    </recommendedName>
    <alternativeName>
        <fullName evidence="1">Molybdenum cofactor biosynthesis protein A</fullName>
    </alternativeName>
</protein>
<reference key="1">
    <citation type="journal article" date="2005" name="PLoS Biol.">
        <title>Major structural differences and novel potential virulence mechanisms from the genomes of multiple Campylobacter species.</title>
        <authorList>
            <person name="Fouts D.E."/>
            <person name="Mongodin E.F."/>
            <person name="Mandrell R.E."/>
            <person name="Miller W.G."/>
            <person name="Rasko D.A."/>
            <person name="Ravel J."/>
            <person name="Brinkac L.M."/>
            <person name="DeBoy R.T."/>
            <person name="Parker C.T."/>
            <person name="Daugherty S.C."/>
            <person name="Dodson R.J."/>
            <person name="Durkin A.S."/>
            <person name="Madupu R."/>
            <person name="Sullivan S.A."/>
            <person name="Shetty J.U."/>
            <person name="Ayodeji M.A."/>
            <person name="Shvartsbeyn A."/>
            <person name="Schatz M.C."/>
            <person name="Badger J.H."/>
            <person name="Fraser C.M."/>
            <person name="Nelson K.E."/>
        </authorList>
    </citation>
    <scope>NUCLEOTIDE SEQUENCE [LARGE SCALE GENOMIC DNA]</scope>
    <source>
        <strain>RM1221</strain>
    </source>
</reference>
<sequence length="320" mass="36656">MLIDQFGRKINYLRISVTQRCNFRCLYCMPKIPFDYQPKENLLSFEELFLFVKAAMDEGIEKIRITGGEPLLRKDLSIFIKMISDYKSDIDLAITTNGFLLKDFAKDLKNAGLKRLNISLDTLDHKKAKTLAQKDVLDSVLSGIDEALNLDLKVKLNTVALKNLNDDELISLLEFAKSKKAQIRFIEFMENTHAYGKLQGLKRDEIIQILSQKYQIQLIKKDEKAPVSIYKADDYEFGIIDPHSHEFCDSCNRIRLSAEGLLIPCLYFDEALSIKEAVRKGDIKAAVEILQEVLRNKPEKNKWSVVDNETSSRAFYQTGG</sequence>
<name>MOAA_CAMJR</name>
<gene>
    <name evidence="1" type="primary">moaA</name>
    <name type="ordered locus">CJE0157</name>
</gene>
<comment type="function">
    <text evidence="1">Catalyzes the cyclization of GTP to (8S)-3',8-cyclo-7,8-dihydroguanosine 5'-triphosphate.</text>
</comment>
<comment type="catalytic activity">
    <reaction evidence="1">
        <text>GTP + AH2 + S-adenosyl-L-methionine = (8S)-3',8-cyclo-7,8-dihydroguanosine 5'-triphosphate + 5'-deoxyadenosine + L-methionine + A + H(+)</text>
        <dbReference type="Rhea" id="RHEA:49576"/>
        <dbReference type="ChEBI" id="CHEBI:13193"/>
        <dbReference type="ChEBI" id="CHEBI:15378"/>
        <dbReference type="ChEBI" id="CHEBI:17319"/>
        <dbReference type="ChEBI" id="CHEBI:17499"/>
        <dbReference type="ChEBI" id="CHEBI:37565"/>
        <dbReference type="ChEBI" id="CHEBI:57844"/>
        <dbReference type="ChEBI" id="CHEBI:59789"/>
        <dbReference type="ChEBI" id="CHEBI:131766"/>
        <dbReference type="EC" id="4.1.99.22"/>
    </reaction>
</comment>
<comment type="cofactor">
    <cofactor evidence="1">
        <name>[4Fe-4S] cluster</name>
        <dbReference type="ChEBI" id="CHEBI:49883"/>
    </cofactor>
    <text evidence="1">Binds 2 [4Fe-4S] clusters. Binds 1 [4Fe-4S] cluster coordinated with 3 cysteines and an exchangeable S-adenosyl-L-methionine and 1 [4Fe-4S] cluster coordinated with 3 cysteines and the GTP-derived substrate.</text>
</comment>
<comment type="pathway">
    <text evidence="1">Cofactor biosynthesis; molybdopterin biosynthesis.</text>
</comment>
<comment type="subunit">
    <text evidence="1">Monomer and homodimer.</text>
</comment>
<comment type="similarity">
    <text evidence="1">Belongs to the radical SAM superfamily. MoaA family.</text>
</comment>
<accession>Q5HX04</accession>
<evidence type="ECO:0000255" key="1">
    <source>
        <dbReference type="HAMAP-Rule" id="MF_01225"/>
    </source>
</evidence>
<evidence type="ECO:0000255" key="2">
    <source>
        <dbReference type="PROSITE-ProRule" id="PRU01266"/>
    </source>
</evidence>
<proteinExistence type="inferred from homology"/>
<keyword id="KW-0004">4Fe-4S</keyword>
<keyword id="KW-0342">GTP-binding</keyword>
<keyword id="KW-0408">Iron</keyword>
<keyword id="KW-0411">Iron-sulfur</keyword>
<keyword id="KW-0456">Lyase</keyword>
<keyword id="KW-0479">Metal-binding</keyword>
<keyword id="KW-0501">Molybdenum cofactor biosynthesis</keyword>
<keyword id="KW-0547">Nucleotide-binding</keyword>
<keyword id="KW-0949">S-adenosyl-L-methionine</keyword>
<dbReference type="EC" id="4.1.99.22" evidence="1"/>
<dbReference type="EMBL" id="CP000025">
    <property type="protein sequence ID" value="AAW34752.1"/>
    <property type="molecule type" value="Genomic_DNA"/>
</dbReference>
<dbReference type="RefSeq" id="WP_011049602.1">
    <property type="nucleotide sequence ID" value="NC_003912.7"/>
</dbReference>
<dbReference type="SMR" id="Q5HX04"/>
<dbReference type="KEGG" id="cjr:CJE0157"/>
<dbReference type="HOGENOM" id="CLU_009273_0_1_7"/>
<dbReference type="UniPathway" id="UPA00344"/>
<dbReference type="GO" id="GO:0051539">
    <property type="term" value="F:4 iron, 4 sulfur cluster binding"/>
    <property type="evidence" value="ECO:0007669"/>
    <property type="project" value="UniProtKB-UniRule"/>
</dbReference>
<dbReference type="GO" id="GO:0061799">
    <property type="term" value="F:cyclic pyranopterin monophosphate synthase activity"/>
    <property type="evidence" value="ECO:0007669"/>
    <property type="project" value="TreeGrafter"/>
</dbReference>
<dbReference type="GO" id="GO:0061798">
    <property type="term" value="F:GTP 3',8'-cyclase activity"/>
    <property type="evidence" value="ECO:0007669"/>
    <property type="project" value="UniProtKB-UniRule"/>
</dbReference>
<dbReference type="GO" id="GO:0005525">
    <property type="term" value="F:GTP binding"/>
    <property type="evidence" value="ECO:0007669"/>
    <property type="project" value="UniProtKB-UniRule"/>
</dbReference>
<dbReference type="GO" id="GO:0046872">
    <property type="term" value="F:metal ion binding"/>
    <property type="evidence" value="ECO:0007669"/>
    <property type="project" value="UniProtKB-KW"/>
</dbReference>
<dbReference type="GO" id="GO:1904047">
    <property type="term" value="F:S-adenosyl-L-methionine binding"/>
    <property type="evidence" value="ECO:0007669"/>
    <property type="project" value="UniProtKB-UniRule"/>
</dbReference>
<dbReference type="GO" id="GO:0006777">
    <property type="term" value="P:Mo-molybdopterin cofactor biosynthetic process"/>
    <property type="evidence" value="ECO:0007669"/>
    <property type="project" value="UniProtKB-UniRule"/>
</dbReference>
<dbReference type="CDD" id="cd01335">
    <property type="entry name" value="Radical_SAM"/>
    <property type="match status" value="1"/>
</dbReference>
<dbReference type="CDD" id="cd21117">
    <property type="entry name" value="Twitch_MoaA"/>
    <property type="match status" value="1"/>
</dbReference>
<dbReference type="FunFam" id="3.20.20.70:FF:000285">
    <property type="entry name" value="GTP 3',8-cyclase"/>
    <property type="match status" value="1"/>
</dbReference>
<dbReference type="Gene3D" id="3.20.20.70">
    <property type="entry name" value="Aldolase class I"/>
    <property type="match status" value="1"/>
</dbReference>
<dbReference type="HAMAP" id="MF_01225_B">
    <property type="entry name" value="MoaA_B"/>
    <property type="match status" value="1"/>
</dbReference>
<dbReference type="InterPro" id="IPR013785">
    <property type="entry name" value="Aldolase_TIM"/>
</dbReference>
<dbReference type="InterPro" id="IPR006638">
    <property type="entry name" value="Elp3/MiaA/NifB-like_rSAM"/>
</dbReference>
<dbReference type="InterPro" id="IPR013483">
    <property type="entry name" value="MoaA"/>
</dbReference>
<dbReference type="InterPro" id="IPR000385">
    <property type="entry name" value="MoaA_NifB_PqqE_Fe-S-bd_CS"/>
</dbReference>
<dbReference type="InterPro" id="IPR010505">
    <property type="entry name" value="MoaA_twitch"/>
</dbReference>
<dbReference type="InterPro" id="IPR050105">
    <property type="entry name" value="MoCo_biosynth_MoaA/MoaC"/>
</dbReference>
<dbReference type="InterPro" id="IPR007197">
    <property type="entry name" value="rSAM"/>
</dbReference>
<dbReference type="NCBIfam" id="TIGR02666">
    <property type="entry name" value="moaA"/>
    <property type="match status" value="1"/>
</dbReference>
<dbReference type="PANTHER" id="PTHR22960:SF0">
    <property type="entry name" value="MOLYBDENUM COFACTOR BIOSYNTHESIS PROTEIN 1"/>
    <property type="match status" value="1"/>
</dbReference>
<dbReference type="PANTHER" id="PTHR22960">
    <property type="entry name" value="MOLYBDOPTERIN COFACTOR SYNTHESIS PROTEIN A"/>
    <property type="match status" value="1"/>
</dbReference>
<dbReference type="Pfam" id="PF13353">
    <property type="entry name" value="Fer4_12"/>
    <property type="match status" value="1"/>
</dbReference>
<dbReference type="Pfam" id="PF06463">
    <property type="entry name" value="Mob_synth_C"/>
    <property type="match status" value="1"/>
</dbReference>
<dbReference type="Pfam" id="PF04055">
    <property type="entry name" value="Radical_SAM"/>
    <property type="match status" value="1"/>
</dbReference>
<dbReference type="SFLD" id="SFLDG01383">
    <property type="entry name" value="cyclic_pyranopterin_phosphate"/>
    <property type="match status" value="1"/>
</dbReference>
<dbReference type="SFLD" id="SFLDG01386">
    <property type="entry name" value="main_SPASM_domain-containing"/>
    <property type="match status" value="1"/>
</dbReference>
<dbReference type="SMART" id="SM00729">
    <property type="entry name" value="Elp3"/>
    <property type="match status" value="1"/>
</dbReference>
<dbReference type="SUPFAM" id="SSF102114">
    <property type="entry name" value="Radical SAM enzymes"/>
    <property type="match status" value="1"/>
</dbReference>
<dbReference type="PROSITE" id="PS01305">
    <property type="entry name" value="MOAA_NIFB_PQQE"/>
    <property type="match status" value="1"/>
</dbReference>
<dbReference type="PROSITE" id="PS51918">
    <property type="entry name" value="RADICAL_SAM"/>
    <property type="match status" value="1"/>
</dbReference>
<feature type="chain" id="PRO_1000054183" description="GTP 3',8-cyclase">
    <location>
        <begin position="1"/>
        <end position="320"/>
    </location>
</feature>
<feature type="domain" description="Radical SAM core" evidence="2">
    <location>
        <begin position="5"/>
        <end position="225"/>
    </location>
</feature>
<feature type="binding site" evidence="1">
    <location>
        <position position="14"/>
    </location>
    <ligand>
        <name>GTP</name>
        <dbReference type="ChEBI" id="CHEBI:37565"/>
    </ligand>
</feature>
<feature type="binding site" evidence="1">
    <location>
        <position position="21"/>
    </location>
    <ligand>
        <name>[4Fe-4S] cluster</name>
        <dbReference type="ChEBI" id="CHEBI:49883"/>
        <label>1</label>
        <note>4Fe-4S-S-AdoMet</note>
    </ligand>
</feature>
<feature type="binding site" evidence="1">
    <location>
        <position position="25"/>
    </location>
    <ligand>
        <name>[4Fe-4S] cluster</name>
        <dbReference type="ChEBI" id="CHEBI:49883"/>
        <label>1</label>
        <note>4Fe-4S-S-AdoMet</note>
    </ligand>
</feature>
<feature type="binding site" evidence="1">
    <location>
        <position position="27"/>
    </location>
    <ligand>
        <name>S-adenosyl-L-methionine</name>
        <dbReference type="ChEBI" id="CHEBI:59789"/>
    </ligand>
</feature>
<feature type="binding site" evidence="1">
    <location>
        <position position="28"/>
    </location>
    <ligand>
        <name>[4Fe-4S] cluster</name>
        <dbReference type="ChEBI" id="CHEBI:49883"/>
        <label>1</label>
        <note>4Fe-4S-S-AdoMet</note>
    </ligand>
</feature>
<feature type="binding site" evidence="1">
    <location>
        <position position="64"/>
    </location>
    <ligand>
        <name>GTP</name>
        <dbReference type="ChEBI" id="CHEBI:37565"/>
    </ligand>
</feature>
<feature type="binding site" evidence="1">
    <location>
        <position position="68"/>
    </location>
    <ligand>
        <name>S-adenosyl-L-methionine</name>
        <dbReference type="ChEBI" id="CHEBI:59789"/>
    </ligand>
</feature>
<feature type="binding site" evidence="1">
    <location>
        <position position="95"/>
    </location>
    <ligand>
        <name>GTP</name>
        <dbReference type="ChEBI" id="CHEBI:37565"/>
    </ligand>
</feature>
<feature type="binding site" evidence="1">
    <location>
        <position position="119"/>
    </location>
    <ligand>
        <name>S-adenosyl-L-methionine</name>
        <dbReference type="ChEBI" id="CHEBI:59789"/>
    </ligand>
</feature>
<feature type="binding site" evidence="1">
    <location>
        <position position="155"/>
    </location>
    <ligand>
        <name>GTP</name>
        <dbReference type="ChEBI" id="CHEBI:37565"/>
    </ligand>
</feature>
<feature type="binding site" evidence="1">
    <location>
        <position position="189"/>
    </location>
    <ligand>
        <name>S-adenosyl-L-methionine</name>
        <dbReference type="ChEBI" id="CHEBI:59789"/>
    </ligand>
</feature>
<feature type="binding site" evidence="1">
    <location>
        <position position="248"/>
    </location>
    <ligand>
        <name>[4Fe-4S] cluster</name>
        <dbReference type="ChEBI" id="CHEBI:49883"/>
        <label>2</label>
        <note>4Fe-4S-substrate</note>
    </ligand>
</feature>
<feature type="binding site" evidence="1">
    <location>
        <position position="251"/>
    </location>
    <ligand>
        <name>[4Fe-4S] cluster</name>
        <dbReference type="ChEBI" id="CHEBI:49883"/>
        <label>2</label>
        <note>4Fe-4S-substrate</note>
    </ligand>
</feature>
<feature type="binding site" evidence="1">
    <location>
        <begin position="253"/>
        <end position="255"/>
    </location>
    <ligand>
        <name>GTP</name>
        <dbReference type="ChEBI" id="CHEBI:37565"/>
    </ligand>
</feature>
<feature type="binding site" evidence="1">
    <location>
        <position position="265"/>
    </location>
    <ligand>
        <name>[4Fe-4S] cluster</name>
        <dbReference type="ChEBI" id="CHEBI:49883"/>
        <label>2</label>
        <note>4Fe-4S-substrate</note>
    </ligand>
</feature>
<organism>
    <name type="scientific">Campylobacter jejuni (strain RM1221)</name>
    <dbReference type="NCBI Taxonomy" id="195099"/>
    <lineage>
        <taxon>Bacteria</taxon>
        <taxon>Pseudomonadati</taxon>
        <taxon>Campylobacterota</taxon>
        <taxon>Epsilonproteobacteria</taxon>
        <taxon>Campylobacterales</taxon>
        <taxon>Campylobacteraceae</taxon>
        <taxon>Campylobacter</taxon>
    </lineage>
</organism>